<comment type="function">
    <text evidence="1">Catalyzes the conversion of 3-deoxy-D-arabino-heptulosonate 7-phosphate (DAHP) to dehydroquinate (DHQ).</text>
</comment>
<comment type="catalytic activity">
    <reaction evidence="1">
        <text>7-phospho-2-dehydro-3-deoxy-D-arabino-heptonate = 3-dehydroquinate + phosphate</text>
        <dbReference type="Rhea" id="RHEA:21968"/>
        <dbReference type="ChEBI" id="CHEBI:32364"/>
        <dbReference type="ChEBI" id="CHEBI:43474"/>
        <dbReference type="ChEBI" id="CHEBI:58394"/>
        <dbReference type="EC" id="4.2.3.4"/>
    </reaction>
</comment>
<comment type="cofactor">
    <cofactor evidence="1">
        <name>Co(2+)</name>
        <dbReference type="ChEBI" id="CHEBI:48828"/>
    </cofactor>
    <cofactor evidence="1">
        <name>Zn(2+)</name>
        <dbReference type="ChEBI" id="CHEBI:29105"/>
    </cofactor>
    <text evidence="1">Binds 1 divalent metal cation per subunit. Can use either Co(2+) or Zn(2+).</text>
</comment>
<comment type="cofactor">
    <cofactor evidence="1">
        <name>NAD(+)</name>
        <dbReference type="ChEBI" id="CHEBI:57540"/>
    </cofactor>
</comment>
<comment type="pathway">
    <text evidence="1">Metabolic intermediate biosynthesis; chorismate biosynthesis; chorismate from D-erythrose 4-phosphate and phosphoenolpyruvate: step 2/7.</text>
</comment>
<comment type="subcellular location">
    <subcellularLocation>
        <location evidence="1">Cytoplasm</location>
    </subcellularLocation>
</comment>
<comment type="similarity">
    <text evidence="1">Belongs to the sugar phosphate cyclases superfamily. Dehydroquinate synthase family.</text>
</comment>
<keyword id="KW-0028">Amino-acid biosynthesis</keyword>
<keyword id="KW-0057">Aromatic amino acid biosynthesis</keyword>
<keyword id="KW-0170">Cobalt</keyword>
<keyword id="KW-0963">Cytoplasm</keyword>
<keyword id="KW-0456">Lyase</keyword>
<keyword id="KW-0479">Metal-binding</keyword>
<keyword id="KW-0520">NAD</keyword>
<keyword id="KW-0547">Nucleotide-binding</keyword>
<keyword id="KW-0862">Zinc</keyword>
<proteinExistence type="inferred from homology"/>
<reference key="1">
    <citation type="journal article" date="2009" name="Genome Res.">
        <title>Newly introduced genomic prophage islands are critical determinants of in vivo competitiveness in the Liverpool epidemic strain of Pseudomonas aeruginosa.</title>
        <authorList>
            <person name="Winstanley C."/>
            <person name="Langille M.G.I."/>
            <person name="Fothergill J.L."/>
            <person name="Kukavica-Ibrulj I."/>
            <person name="Paradis-Bleau C."/>
            <person name="Sanschagrin F."/>
            <person name="Thomson N.R."/>
            <person name="Winsor G.L."/>
            <person name="Quail M.A."/>
            <person name="Lennard N."/>
            <person name="Bignell A."/>
            <person name="Clarke L."/>
            <person name="Seeger K."/>
            <person name="Saunders D."/>
            <person name="Harris D."/>
            <person name="Parkhill J."/>
            <person name="Hancock R.E.W."/>
            <person name="Brinkman F.S.L."/>
            <person name="Levesque R.C."/>
        </authorList>
    </citation>
    <scope>NUCLEOTIDE SEQUENCE [LARGE SCALE GENOMIC DNA]</scope>
    <source>
        <strain>LESB58</strain>
    </source>
</reference>
<evidence type="ECO:0000255" key="1">
    <source>
        <dbReference type="HAMAP-Rule" id="MF_00110"/>
    </source>
</evidence>
<gene>
    <name evidence="1" type="primary">aroB</name>
    <name type="ordered locus">PLES_54281</name>
</gene>
<dbReference type="EC" id="4.2.3.4" evidence="1"/>
<dbReference type="EMBL" id="FM209186">
    <property type="protein sequence ID" value="CAW30182.1"/>
    <property type="molecule type" value="Genomic_DNA"/>
</dbReference>
<dbReference type="RefSeq" id="WP_012614628.1">
    <property type="nucleotide sequence ID" value="NC_011770.1"/>
</dbReference>
<dbReference type="SMR" id="B7V3D1"/>
<dbReference type="KEGG" id="pag:PLES_54281"/>
<dbReference type="HOGENOM" id="CLU_001201_0_2_6"/>
<dbReference type="UniPathway" id="UPA00053">
    <property type="reaction ID" value="UER00085"/>
</dbReference>
<dbReference type="GO" id="GO:0005737">
    <property type="term" value="C:cytoplasm"/>
    <property type="evidence" value="ECO:0007669"/>
    <property type="project" value="UniProtKB-SubCell"/>
</dbReference>
<dbReference type="GO" id="GO:0003856">
    <property type="term" value="F:3-dehydroquinate synthase activity"/>
    <property type="evidence" value="ECO:0007669"/>
    <property type="project" value="UniProtKB-UniRule"/>
</dbReference>
<dbReference type="GO" id="GO:0046872">
    <property type="term" value="F:metal ion binding"/>
    <property type="evidence" value="ECO:0007669"/>
    <property type="project" value="UniProtKB-KW"/>
</dbReference>
<dbReference type="GO" id="GO:0000166">
    <property type="term" value="F:nucleotide binding"/>
    <property type="evidence" value="ECO:0007669"/>
    <property type="project" value="UniProtKB-KW"/>
</dbReference>
<dbReference type="GO" id="GO:0008652">
    <property type="term" value="P:amino acid biosynthetic process"/>
    <property type="evidence" value="ECO:0007669"/>
    <property type="project" value="UniProtKB-KW"/>
</dbReference>
<dbReference type="GO" id="GO:0009073">
    <property type="term" value="P:aromatic amino acid family biosynthetic process"/>
    <property type="evidence" value="ECO:0007669"/>
    <property type="project" value="UniProtKB-KW"/>
</dbReference>
<dbReference type="GO" id="GO:0009423">
    <property type="term" value="P:chorismate biosynthetic process"/>
    <property type="evidence" value="ECO:0007669"/>
    <property type="project" value="UniProtKB-UniRule"/>
</dbReference>
<dbReference type="CDD" id="cd08195">
    <property type="entry name" value="DHQS"/>
    <property type="match status" value="1"/>
</dbReference>
<dbReference type="FunFam" id="1.20.1090.10:FF:000002">
    <property type="entry name" value="3-dehydroquinate synthase"/>
    <property type="match status" value="1"/>
</dbReference>
<dbReference type="FunFam" id="3.40.50.1970:FF:000001">
    <property type="entry name" value="3-dehydroquinate synthase"/>
    <property type="match status" value="1"/>
</dbReference>
<dbReference type="Gene3D" id="3.40.50.1970">
    <property type="match status" value="1"/>
</dbReference>
<dbReference type="Gene3D" id="1.20.1090.10">
    <property type="entry name" value="Dehydroquinate synthase-like - alpha domain"/>
    <property type="match status" value="1"/>
</dbReference>
<dbReference type="HAMAP" id="MF_00110">
    <property type="entry name" value="DHQ_synthase"/>
    <property type="match status" value="1"/>
</dbReference>
<dbReference type="InterPro" id="IPR050071">
    <property type="entry name" value="Dehydroquinate_synthase"/>
</dbReference>
<dbReference type="InterPro" id="IPR016037">
    <property type="entry name" value="DHQ_synth_AroB"/>
</dbReference>
<dbReference type="InterPro" id="IPR030963">
    <property type="entry name" value="DHQ_synth_fam"/>
</dbReference>
<dbReference type="InterPro" id="IPR030960">
    <property type="entry name" value="DHQS/DOIS_N"/>
</dbReference>
<dbReference type="InterPro" id="IPR056179">
    <property type="entry name" value="DHQS_C"/>
</dbReference>
<dbReference type="NCBIfam" id="TIGR01357">
    <property type="entry name" value="aroB"/>
    <property type="match status" value="1"/>
</dbReference>
<dbReference type="PANTHER" id="PTHR43622">
    <property type="entry name" value="3-DEHYDROQUINATE SYNTHASE"/>
    <property type="match status" value="1"/>
</dbReference>
<dbReference type="PANTHER" id="PTHR43622:SF7">
    <property type="entry name" value="3-DEHYDROQUINATE SYNTHASE, CHLOROPLASTIC"/>
    <property type="match status" value="1"/>
</dbReference>
<dbReference type="Pfam" id="PF01761">
    <property type="entry name" value="DHQ_synthase"/>
    <property type="match status" value="1"/>
</dbReference>
<dbReference type="Pfam" id="PF24621">
    <property type="entry name" value="DHQS_C"/>
    <property type="match status" value="1"/>
</dbReference>
<dbReference type="PIRSF" id="PIRSF001455">
    <property type="entry name" value="DHQ_synth"/>
    <property type="match status" value="1"/>
</dbReference>
<dbReference type="SUPFAM" id="SSF56796">
    <property type="entry name" value="Dehydroquinate synthase-like"/>
    <property type="match status" value="1"/>
</dbReference>
<accession>B7V3D1</accession>
<organism>
    <name type="scientific">Pseudomonas aeruginosa (strain LESB58)</name>
    <dbReference type="NCBI Taxonomy" id="557722"/>
    <lineage>
        <taxon>Bacteria</taxon>
        <taxon>Pseudomonadati</taxon>
        <taxon>Pseudomonadota</taxon>
        <taxon>Gammaproteobacteria</taxon>
        <taxon>Pseudomonadales</taxon>
        <taxon>Pseudomonadaceae</taxon>
        <taxon>Pseudomonas</taxon>
    </lineage>
</organism>
<feature type="chain" id="PRO_1000117495" description="3-dehydroquinate synthase">
    <location>
        <begin position="1"/>
        <end position="368"/>
    </location>
</feature>
<feature type="binding site" evidence="1">
    <location>
        <begin position="69"/>
        <end position="74"/>
    </location>
    <ligand>
        <name>NAD(+)</name>
        <dbReference type="ChEBI" id="CHEBI:57540"/>
    </ligand>
</feature>
<feature type="binding site" evidence="1">
    <location>
        <begin position="103"/>
        <end position="107"/>
    </location>
    <ligand>
        <name>NAD(+)</name>
        <dbReference type="ChEBI" id="CHEBI:57540"/>
    </ligand>
</feature>
<feature type="binding site" evidence="1">
    <location>
        <begin position="127"/>
        <end position="128"/>
    </location>
    <ligand>
        <name>NAD(+)</name>
        <dbReference type="ChEBI" id="CHEBI:57540"/>
    </ligand>
</feature>
<feature type="binding site" evidence="1">
    <location>
        <position position="140"/>
    </location>
    <ligand>
        <name>NAD(+)</name>
        <dbReference type="ChEBI" id="CHEBI:57540"/>
    </ligand>
</feature>
<feature type="binding site" evidence="1">
    <location>
        <position position="149"/>
    </location>
    <ligand>
        <name>NAD(+)</name>
        <dbReference type="ChEBI" id="CHEBI:57540"/>
    </ligand>
</feature>
<feature type="binding site" evidence="1">
    <location>
        <position position="182"/>
    </location>
    <ligand>
        <name>Zn(2+)</name>
        <dbReference type="ChEBI" id="CHEBI:29105"/>
    </ligand>
</feature>
<feature type="binding site" evidence="1">
    <location>
        <position position="245"/>
    </location>
    <ligand>
        <name>Zn(2+)</name>
        <dbReference type="ChEBI" id="CHEBI:29105"/>
    </ligand>
</feature>
<feature type="binding site" evidence="1">
    <location>
        <position position="262"/>
    </location>
    <ligand>
        <name>Zn(2+)</name>
        <dbReference type="ChEBI" id="CHEBI:29105"/>
    </ligand>
</feature>
<protein>
    <recommendedName>
        <fullName evidence="1">3-dehydroquinate synthase</fullName>
        <shortName evidence="1">DHQS</shortName>
        <ecNumber evidence="1">4.2.3.4</ecNumber>
    </recommendedName>
</protein>
<sequence length="368" mass="40153">MRTLHVDLGERSYPIYIGENLLGDARWFAPHIVGRRVAVISNETVAPLYLETLLKALQGHEVTPVVLPDGEAYKQWETLQLIFDALLKERHDRKTTLIALGGGVIGDMAGFAAACYQRGVNFIQVPTTLLSQVDSSVGGKTGINHPLGKNMIGAFYQPQAVVIDTASLKTLPSRELSAGLAEVIKYGFICDEPFITWLEEHMDALLALEPTVVTEAIERSCAAKARVVGADERELGVRATLNLGHTFGHAIETQQGYGVWLHGEAVGAGTVMALEMSHRLGWLSAAERDRGTRLLRRAGLPVVPPAEMTAEDFMEHMAVDKKVLDGRLRLVLLQGLGNAVVTGDFPREILDATLRTDYRALADQLGDE</sequence>
<name>AROB_PSEA8</name>